<protein>
    <recommendedName>
        <fullName evidence="1">Probable lipid kinase YegS</fullName>
        <ecNumber evidence="1">2.7.1.-</ecNumber>
    </recommendedName>
</protein>
<keyword id="KW-0067">ATP-binding</keyword>
<keyword id="KW-0963">Cytoplasm</keyword>
<keyword id="KW-0418">Kinase</keyword>
<keyword id="KW-0444">Lipid biosynthesis</keyword>
<keyword id="KW-0443">Lipid metabolism</keyword>
<keyword id="KW-0460">Magnesium</keyword>
<keyword id="KW-0479">Metal-binding</keyword>
<keyword id="KW-0547">Nucleotide-binding</keyword>
<keyword id="KW-0594">Phospholipid biosynthesis</keyword>
<keyword id="KW-1208">Phospholipid metabolism</keyword>
<keyword id="KW-1185">Reference proteome</keyword>
<keyword id="KW-0808">Transferase</keyword>
<sequence>MANFPDSLLILNGKSADNQPLREAITLLRDEGIQIHVRVTWEKGDAQRYVDEARRLGVETVIAGGGDGTINEVSTALIQIRDGVVPALGLLPLGTANDFATSAGIPEALDKALKLAIAGNAMEIDMARVNDKTSFINMATGGFGTRITTETPEKLKAALGGVSYLIHGLMRMDTLKPDRCEIRGENFHWQGNALVIGIGNGRQAGGGQQLCPTALINDGLLQLRIFTGEELLPALFSTLTQSDDNQNIIDGASAWFDIHAPHEITFNLDGEPLSGQEFHIEVLPGALRCRLPPDCPLLR</sequence>
<accession>A9MKW3</accession>
<proteinExistence type="inferred from homology"/>
<name>YEGS_SALAR</name>
<reference key="1">
    <citation type="submission" date="2007-11" db="EMBL/GenBank/DDBJ databases">
        <authorList>
            <consortium name="The Salmonella enterica serovar Arizonae Genome Sequencing Project"/>
            <person name="McClelland M."/>
            <person name="Sanderson E.K."/>
            <person name="Porwollik S."/>
            <person name="Spieth J."/>
            <person name="Clifton W.S."/>
            <person name="Fulton R."/>
            <person name="Chunyan W."/>
            <person name="Wollam A."/>
            <person name="Shah N."/>
            <person name="Pepin K."/>
            <person name="Bhonagiri V."/>
            <person name="Nash W."/>
            <person name="Johnson M."/>
            <person name="Thiruvilangam P."/>
            <person name="Wilson R."/>
        </authorList>
    </citation>
    <scope>NUCLEOTIDE SEQUENCE [LARGE SCALE GENOMIC DNA]</scope>
    <source>
        <strain>ATCC BAA-731 / CDC346-86 / RSK2980</strain>
    </source>
</reference>
<organism>
    <name type="scientific">Salmonella arizonae (strain ATCC BAA-731 / CDC346-86 / RSK2980)</name>
    <dbReference type="NCBI Taxonomy" id="41514"/>
    <lineage>
        <taxon>Bacteria</taxon>
        <taxon>Pseudomonadati</taxon>
        <taxon>Pseudomonadota</taxon>
        <taxon>Gammaproteobacteria</taxon>
        <taxon>Enterobacterales</taxon>
        <taxon>Enterobacteriaceae</taxon>
        <taxon>Salmonella</taxon>
    </lineage>
</organism>
<comment type="function">
    <text evidence="1">Probably phosphorylates lipids; the in vivo substrate is unknown.</text>
</comment>
<comment type="cofactor">
    <cofactor evidence="1">
        <name>Mg(2+)</name>
        <dbReference type="ChEBI" id="CHEBI:18420"/>
    </cofactor>
    <cofactor evidence="1">
        <name>Ca(2+)</name>
        <dbReference type="ChEBI" id="CHEBI:29108"/>
    </cofactor>
    <text evidence="1">Binds 1 Mg(2+) ion per subunit. Ca(2+) may be able to substitute.</text>
</comment>
<comment type="subcellular location">
    <subcellularLocation>
        <location evidence="1">Cytoplasm</location>
    </subcellularLocation>
</comment>
<comment type="similarity">
    <text evidence="1">Belongs to the diacylglycerol/lipid kinase family. YegS lipid kinase subfamily.</text>
</comment>
<gene>
    <name evidence="1" type="primary">yegS</name>
    <name type="ordered locus">SARI_00757</name>
</gene>
<feature type="chain" id="PRO_1000087293" description="Probable lipid kinase YegS">
    <location>
        <begin position="1"/>
        <end position="299"/>
    </location>
</feature>
<feature type="domain" description="DAGKc" evidence="1">
    <location>
        <begin position="2"/>
        <end position="133"/>
    </location>
</feature>
<feature type="active site" description="Proton acceptor" evidence="1">
    <location>
        <position position="271"/>
    </location>
</feature>
<feature type="binding site" evidence="1">
    <location>
        <position position="40"/>
    </location>
    <ligand>
        <name>ATP</name>
        <dbReference type="ChEBI" id="CHEBI:30616"/>
    </ligand>
</feature>
<feature type="binding site" evidence="1">
    <location>
        <begin position="66"/>
        <end position="72"/>
    </location>
    <ligand>
        <name>ATP</name>
        <dbReference type="ChEBI" id="CHEBI:30616"/>
    </ligand>
</feature>
<feature type="binding site" evidence="1">
    <location>
        <position position="95"/>
    </location>
    <ligand>
        <name>ATP</name>
        <dbReference type="ChEBI" id="CHEBI:30616"/>
    </ligand>
</feature>
<feature type="binding site" evidence="1">
    <location>
        <position position="215"/>
    </location>
    <ligand>
        <name>Mg(2+)</name>
        <dbReference type="ChEBI" id="CHEBI:18420"/>
    </ligand>
</feature>
<feature type="binding site" evidence="1">
    <location>
        <position position="218"/>
    </location>
    <ligand>
        <name>Mg(2+)</name>
        <dbReference type="ChEBI" id="CHEBI:18420"/>
    </ligand>
</feature>
<feature type="binding site" evidence="1">
    <location>
        <position position="220"/>
    </location>
    <ligand>
        <name>Mg(2+)</name>
        <dbReference type="ChEBI" id="CHEBI:18420"/>
    </ligand>
</feature>
<evidence type="ECO:0000255" key="1">
    <source>
        <dbReference type="HAMAP-Rule" id="MF_01377"/>
    </source>
</evidence>
<dbReference type="EC" id="2.7.1.-" evidence="1"/>
<dbReference type="EMBL" id="CP000880">
    <property type="protein sequence ID" value="ABX20679.1"/>
    <property type="molecule type" value="Genomic_DNA"/>
</dbReference>
<dbReference type="SMR" id="A9MKW3"/>
<dbReference type="STRING" id="41514.SARI_00757"/>
<dbReference type="KEGG" id="ses:SARI_00757"/>
<dbReference type="HOGENOM" id="CLU_045532_1_1_6"/>
<dbReference type="Proteomes" id="UP000002084">
    <property type="component" value="Chromosome"/>
</dbReference>
<dbReference type="GO" id="GO:0005737">
    <property type="term" value="C:cytoplasm"/>
    <property type="evidence" value="ECO:0007669"/>
    <property type="project" value="UniProtKB-SubCell"/>
</dbReference>
<dbReference type="GO" id="GO:0005886">
    <property type="term" value="C:plasma membrane"/>
    <property type="evidence" value="ECO:0007669"/>
    <property type="project" value="TreeGrafter"/>
</dbReference>
<dbReference type="GO" id="GO:0005524">
    <property type="term" value="F:ATP binding"/>
    <property type="evidence" value="ECO:0007669"/>
    <property type="project" value="UniProtKB-UniRule"/>
</dbReference>
<dbReference type="GO" id="GO:0001727">
    <property type="term" value="F:lipid kinase activity"/>
    <property type="evidence" value="ECO:0007669"/>
    <property type="project" value="UniProtKB-UniRule"/>
</dbReference>
<dbReference type="GO" id="GO:0000287">
    <property type="term" value="F:magnesium ion binding"/>
    <property type="evidence" value="ECO:0007669"/>
    <property type="project" value="UniProtKB-UniRule"/>
</dbReference>
<dbReference type="GO" id="GO:0008654">
    <property type="term" value="P:phospholipid biosynthetic process"/>
    <property type="evidence" value="ECO:0007669"/>
    <property type="project" value="UniProtKB-UniRule"/>
</dbReference>
<dbReference type="FunFam" id="3.40.50.10330:FF:000008">
    <property type="entry name" value="Probable lipid kinase YegS"/>
    <property type="match status" value="1"/>
</dbReference>
<dbReference type="Gene3D" id="2.60.200.40">
    <property type="match status" value="1"/>
</dbReference>
<dbReference type="Gene3D" id="3.40.50.10330">
    <property type="entry name" value="Probable inorganic polyphosphate/atp-NAD kinase, domain 1"/>
    <property type="match status" value="1"/>
</dbReference>
<dbReference type="HAMAP" id="MF_01377">
    <property type="entry name" value="YegS"/>
    <property type="match status" value="1"/>
</dbReference>
<dbReference type="InterPro" id="IPR017438">
    <property type="entry name" value="ATP-NAD_kinase_N"/>
</dbReference>
<dbReference type="InterPro" id="IPR005218">
    <property type="entry name" value="Diacylglycerol/lipid_kinase"/>
</dbReference>
<dbReference type="InterPro" id="IPR001206">
    <property type="entry name" value="Diacylglycerol_kinase_cat_dom"/>
</dbReference>
<dbReference type="InterPro" id="IPR022433">
    <property type="entry name" value="Lip_kinase_YegS"/>
</dbReference>
<dbReference type="InterPro" id="IPR050187">
    <property type="entry name" value="Lipid_Phosphate_FormReg"/>
</dbReference>
<dbReference type="InterPro" id="IPR016064">
    <property type="entry name" value="NAD/diacylglycerol_kinase_sf"/>
</dbReference>
<dbReference type="InterPro" id="IPR045540">
    <property type="entry name" value="YegS/DAGK_C"/>
</dbReference>
<dbReference type="NCBIfam" id="TIGR03702">
    <property type="entry name" value="lip_kinase_YegS"/>
    <property type="match status" value="1"/>
</dbReference>
<dbReference type="NCBIfam" id="NF009602">
    <property type="entry name" value="PRK13054.1"/>
    <property type="match status" value="1"/>
</dbReference>
<dbReference type="NCBIfam" id="TIGR00147">
    <property type="entry name" value="YegS/Rv2252/BmrU family lipid kinase"/>
    <property type="match status" value="1"/>
</dbReference>
<dbReference type="PANTHER" id="PTHR12358:SF106">
    <property type="entry name" value="LIPID KINASE YEGS"/>
    <property type="match status" value="1"/>
</dbReference>
<dbReference type="PANTHER" id="PTHR12358">
    <property type="entry name" value="SPHINGOSINE KINASE"/>
    <property type="match status" value="1"/>
</dbReference>
<dbReference type="Pfam" id="PF00781">
    <property type="entry name" value="DAGK_cat"/>
    <property type="match status" value="1"/>
</dbReference>
<dbReference type="Pfam" id="PF19279">
    <property type="entry name" value="YegS_C"/>
    <property type="match status" value="1"/>
</dbReference>
<dbReference type="SMART" id="SM00046">
    <property type="entry name" value="DAGKc"/>
    <property type="match status" value="1"/>
</dbReference>
<dbReference type="SUPFAM" id="SSF111331">
    <property type="entry name" value="NAD kinase/diacylglycerol kinase-like"/>
    <property type="match status" value="1"/>
</dbReference>
<dbReference type="PROSITE" id="PS50146">
    <property type="entry name" value="DAGK"/>
    <property type="match status" value="1"/>
</dbReference>